<protein>
    <recommendedName>
        <fullName evidence="1">Urease subunit alpha</fullName>
        <ecNumber evidence="1">3.5.1.5</ecNumber>
    </recommendedName>
    <alternativeName>
        <fullName evidence="1">Urea amidohydrolase subunit alpha</fullName>
    </alternativeName>
</protein>
<organism>
    <name type="scientific">Mycobacterium sp. (strain MCS)</name>
    <dbReference type="NCBI Taxonomy" id="164756"/>
    <lineage>
        <taxon>Bacteria</taxon>
        <taxon>Bacillati</taxon>
        <taxon>Actinomycetota</taxon>
        <taxon>Actinomycetes</taxon>
        <taxon>Mycobacteriales</taxon>
        <taxon>Mycobacteriaceae</taxon>
        <taxon>Mycobacterium</taxon>
    </lineage>
</organism>
<feature type="chain" id="PRO_1000070672" description="Urease subunit alpha">
    <location>
        <begin position="1"/>
        <end position="573"/>
    </location>
</feature>
<feature type="domain" description="Urease" evidence="1">
    <location>
        <begin position="136"/>
        <end position="573"/>
    </location>
</feature>
<feature type="active site" description="Proton donor" evidence="1">
    <location>
        <position position="327"/>
    </location>
</feature>
<feature type="binding site" evidence="1">
    <location>
        <position position="141"/>
    </location>
    <ligand>
        <name>Ni(2+)</name>
        <dbReference type="ChEBI" id="CHEBI:49786"/>
        <label>1</label>
    </ligand>
</feature>
<feature type="binding site" evidence="1">
    <location>
        <position position="143"/>
    </location>
    <ligand>
        <name>Ni(2+)</name>
        <dbReference type="ChEBI" id="CHEBI:49786"/>
        <label>1</label>
    </ligand>
</feature>
<feature type="binding site" description="via carbamate group" evidence="1">
    <location>
        <position position="224"/>
    </location>
    <ligand>
        <name>Ni(2+)</name>
        <dbReference type="ChEBI" id="CHEBI:49786"/>
        <label>1</label>
    </ligand>
</feature>
<feature type="binding site" description="via carbamate group" evidence="1">
    <location>
        <position position="224"/>
    </location>
    <ligand>
        <name>Ni(2+)</name>
        <dbReference type="ChEBI" id="CHEBI:49786"/>
        <label>2</label>
    </ligand>
</feature>
<feature type="binding site" evidence="1">
    <location>
        <position position="226"/>
    </location>
    <ligand>
        <name>substrate</name>
    </ligand>
</feature>
<feature type="binding site" evidence="1">
    <location>
        <position position="253"/>
    </location>
    <ligand>
        <name>Ni(2+)</name>
        <dbReference type="ChEBI" id="CHEBI:49786"/>
        <label>2</label>
    </ligand>
</feature>
<feature type="binding site" evidence="1">
    <location>
        <position position="279"/>
    </location>
    <ligand>
        <name>Ni(2+)</name>
        <dbReference type="ChEBI" id="CHEBI:49786"/>
        <label>2</label>
    </ligand>
</feature>
<feature type="binding site" evidence="1">
    <location>
        <position position="367"/>
    </location>
    <ligand>
        <name>Ni(2+)</name>
        <dbReference type="ChEBI" id="CHEBI:49786"/>
        <label>1</label>
    </ligand>
</feature>
<feature type="modified residue" description="N6-carboxylysine" evidence="1">
    <location>
        <position position="224"/>
    </location>
</feature>
<sequence>MTGLSRERYAALYGPTTGDRIRLADTDLVIEITEDRSGGTGLAGDEAVFGGGKVLRESMGQSRATRADGAPDTVITGAVILDHWGIIKADIGIRDGRIVAIGKAGNPDIMDGVHPDLVVGPSTEIIAGNGRILTAGAIDCHVHLICPQIMEEALGGGITTIVAGGTGPAEGSKATTVTPGAWHLARMLEALDTWPLNVVLLGKGNTVSAEAMWEQLRGGAAGFKLHEDWGTTPAAIDACLTVADAAGVQVNIHTDTLNEMAFVEDTLAAIKGRSIHAYHTEGAGGGHAPDIITVASHPNVLPSSTNPTRPHTVNTLDEHLDMLMVCHHLNPSVPEDLAFAESRIRPSTIAAEDLLHDIGAISMIGSDAQAMGRIGEVVLRTWQTAHVMKRRRGALEGDGRADNNRARRYVAKYTICPAVAHGLDGEIGSVEVGKLADLVLWEPAFFGVRPHAVIKGGMIAWAAMGDANASIPTPQPVLPRPMFGAAPAAAAATSVHFVSPQAIEDGLADRIDVRRSLIAVADCRHVGKAQMPLNDAMPRIEVDPDTFTVRIDGDVWQEQPAAELPMAQRYFLF</sequence>
<keyword id="KW-0963">Cytoplasm</keyword>
<keyword id="KW-0378">Hydrolase</keyword>
<keyword id="KW-0479">Metal-binding</keyword>
<keyword id="KW-0533">Nickel</keyword>
<comment type="catalytic activity">
    <reaction evidence="1">
        <text>urea + 2 H2O + H(+) = hydrogencarbonate + 2 NH4(+)</text>
        <dbReference type="Rhea" id="RHEA:20557"/>
        <dbReference type="ChEBI" id="CHEBI:15377"/>
        <dbReference type="ChEBI" id="CHEBI:15378"/>
        <dbReference type="ChEBI" id="CHEBI:16199"/>
        <dbReference type="ChEBI" id="CHEBI:17544"/>
        <dbReference type="ChEBI" id="CHEBI:28938"/>
        <dbReference type="EC" id="3.5.1.5"/>
    </reaction>
</comment>
<comment type="cofactor">
    <cofactor evidence="1">
        <name>Ni cation</name>
        <dbReference type="ChEBI" id="CHEBI:25516"/>
    </cofactor>
    <text evidence="1">Binds 2 nickel ions per subunit.</text>
</comment>
<comment type="pathway">
    <text evidence="1">Nitrogen metabolism; urea degradation; CO(2) and NH(3) from urea (urease route): step 1/1.</text>
</comment>
<comment type="subunit">
    <text evidence="1">Heterotrimer of UreA (gamma), UreB (beta) and UreC (alpha) subunits. Three heterotrimers associate to form the active enzyme.</text>
</comment>
<comment type="subcellular location">
    <subcellularLocation>
        <location evidence="1">Cytoplasm</location>
    </subcellularLocation>
</comment>
<comment type="PTM">
    <text evidence="1">Carboxylation allows a single lysine to coordinate two nickel ions.</text>
</comment>
<comment type="similarity">
    <text evidence="1">Belongs to the metallo-dependent hydrolases superfamily. Urease alpha subunit family.</text>
</comment>
<dbReference type="EC" id="3.5.1.5" evidence="1"/>
<dbReference type="EMBL" id="CP000384">
    <property type="protein sequence ID" value="ABG08912.1"/>
    <property type="molecule type" value="Genomic_DNA"/>
</dbReference>
<dbReference type="SMR" id="Q1B872"/>
<dbReference type="MEROPS" id="M38.982"/>
<dbReference type="KEGG" id="mmc:Mmcs_2805"/>
<dbReference type="HOGENOM" id="CLU_000980_0_0_11"/>
<dbReference type="BioCyc" id="MSP164756:G1G6O-2859-MONOMER"/>
<dbReference type="UniPathway" id="UPA00258">
    <property type="reaction ID" value="UER00370"/>
</dbReference>
<dbReference type="GO" id="GO:0005737">
    <property type="term" value="C:cytoplasm"/>
    <property type="evidence" value="ECO:0007669"/>
    <property type="project" value="UniProtKB-SubCell"/>
</dbReference>
<dbReference type="GO" id="GO:0016151">
    <property type="term" value="F:nickel cation binding"/>
    <property type="evidence" value="ECO:0007669"/>
    <property type="project" value="UniProtKB-UniRule"/>
</dbReference>
<dbReference type="GO" id="GO:0009039">
    <property type="term" value="F:urease activity"/>
    <property type="evidence" value="ECO:0007669"/>
    <property type="project" value="UniProtKB-UniRule"/>
</dbReference>
<dbReference type="GO" id="GO:0043419">
    <property type="term" value="P:urea catabolic process"/>
    <property type="evidence" value="ECO:0007669"/>
    <property type="project" value="UniProtKB-UniRule"/>
</dbReference>
<dbReference type="CDD" id="cd00375">
    <property type="entry name" value="Urease_alpha"/>
    <property type="match status" value="1"/>
</dbReference>
<dbReference type="Gene3D" id="3.20.20.140">
    <property type="entry name" value="Metal-dependent hydrolases"/>
    <property type="match status" value="1"/>
</dbReference>
<dbReference type="Gene3D" id="2.30.40.10">
    <property type="entry name" value="Urease, subunit C, domain 1"/>
    <property type="match status" value="1"/>
</dbReference>
<dbReference type="HAMAP" id="MF_01953">
    <property type="entry name" value="Urease_alpha"/>
    <property type="match status" value="1"/>
</dbReference>
<dbReference type="InterPro" id="IPR006680">
    <property type="entry name" value="Amidohydro-rel"/>
</dbReference>
<dbReference type="InterPro" id="IPR011059">
    <property type="entry name" value="Metal-dep_hydrolase_composite"/>
</dbReference>
<dbReference type="InterPro" id="IPR032466">
    <property type="entry name" value="Metal_Hydrolase"/>
</dbReference>
<dbReference type="InterPro" id="IPR011612">
    <property type="entry name" value="Urease_alpha_N_dom"/>
</dbReference>
<dbReference type="InterPro" id="IPR050112">
    <property type="entry name" value="Urease_alpha_subunit"/>
</dbReference>
<dbReference type="InterPro" id="IPR017950">
    <property type="entry name" value="Urease_AS"/>
</dbReference>
<dbReference type="InterPro" id="IPR005848">
    <property type="entry name" value="Urease_asu"/>
</dbReference>
<dbReference type="InterPro" id="IPR017951">
    <property type="entry name" value="Urease_asu_c"/>
</dbReference>
<dbReference type="InterPro" id="IPR029754">
    <property type="entry name" value="Urease_Ni-bd"/>
</dbReference>
<dbReference type="NCBIfam" id="NF009685">
    <property type="entry name" value="PRK13206.1"/>
    <property type="match status" value="1"/>
</dbReference>
<dbReference type="NCBIfam" id="NF009686">
    <property type="entry name" value="PRK13207.1"/>
    <property type="match status" value="1"/>
</dbReference>
<dbReference type="NCBIfam" id="TIGR01792">
    <property type="entry name" value="urease_alph"/>
    <property type="match status" value="1"/>
</dbReference>
<dbReference type="PANTHER" id="PTHR43440">
    <property type="entry name" value="UREASE"/>
    <property type="match status" value="1"/>
</dbReference>
<dbReference type="PANTHER" id="PTHR43440:SF1">
    <property type="entry name" value="UREASE"/>
    <property type="match status" value="1"/>
</dbReference>
<dbReference type="Pfam" id="PF01979">
    <property type="entry name" value="Amidohydro_1"/>
    <property type="match status" value="1"/>
</dbReference>
<dbReference type="Pfam" id="PF00449">
    <property type="entry name" value="Urease_alpha"/>
    <property type="match status" value="1"/>
</dbReference>
<dbReference type="PRINTS" id="PR01752">
    <property type="entry name" value="UREASE"/>
</dbReference>
<dbReference type="SUPFAM" id="SSF51338">
    <property type="entry name" value="Composite domain of metallo-dependent hydrolases"/>
    <property type="match status" value="2"/>
</dbReference>
<dbReference type="SUPFAM" id="SSF51556">
    <property type="entry name" value="Metallo-dependent hydrolases"/>
    <property type="match status" value="1"/>
</dbReference>
<dbReference type="PROSITE" id="PS01120">
    <property type="entry name" value="UREASE_1"/>
    <property type="match status" value="1"/>
</dbReference>
<dbReference type="PROSITE" id="PS00145">
    <property type="entry name" value="UREASE_2"/>
    <property type="match status" value="1"/>
</dbReference>
<dbReference type="PROSITE" id="PS51368">
    <property type="entry name" value="UREASE_3"/>
    <property type="match status" value="1"/>
</dbReference>
<accession>Q1B872</accession>
<proteinExistence type="inferred from homology"/>
<name>URE1_MYCSS</name>
<reference key="1">
    <citation type="submission" date="2006-06" db="EMBL/GenBank/DDBJ databases">
        <title>Complete sequence of chromosome of Mycobacterium sp. MCS.</title>
        <authorList>
            <consortium name="US DOE Joint Genome Institute"/>
            <person name="Copeland A."/>
            <person name="Lucas S."/>
            <person name="Lapidus A."/>
            <person name="Barry K."/>
            <person name="Detter J.C."/>
            <person name="Glavina del Rio T."/>
            <person name="Hammon N."/>
            <person name="Israni S."/>
            <person name="Dalin E."/>
            <person name="Tice H."/>
            <person name="Pitluck S."/>
            <person name="Martinez M."/>
            <person name="Schmutz J."/>
            <person name="Larimer F."/>
            <person name="Land M."/>
            <person name="Hauser L."/>
            <person name="Kyrpides N."/>
            <person name="Kim E."/>
            <person name="Miller C.D."/>
            <person name="Hughes J.E."/>
            <person name="Anderson A.J."/>
            <person name="Sims R.C."/>
            <person name="Richardson P."/>
        </authorList>
    </citation>
    <scope>NUCLEOTIDE SEQUENCE [LARGE SCALE GENOMIC DNA]</scope>
    <source>
        <strain>MCS</strain>
    </source>
</reference>
<evidence type="ECO:0000255" key="1">
    <source>
        <dbReference type="HAMAP-Rule" id="MF_01953"/>
    </source>
</evidence>
<gene>
    <name evidence="1" type="primary">ureC</name>
    <name type="ordered locus">Mmcs_2805</name>
</gene>